<organism>
    <name type="scientific">Escherichia fergusonii (strain ATCC 35469 / DSM 13698 / CCUG 18766 / IAM 14443 / JCM 21226 / LMG 7866 / NBRC 102419 / NCTC 12128 / CDC 0568-73)</name>
    <dbReference type="NCBI Taxonomy" id="585054"/>
    <lineage>
        <taxon>Bacteria</taxon>
        <taxon>Pseudomonadati</taxon>
        <taxon>Pseudomonadota</taxon>
        <taxon>Gammaproteobacteria</taxon>
        <taxon>Enterobacterales</taxon>
        <taxon>Enterobacteriaceae</taxon>
        <taxon>Escherichia</taxon>
    </lineage>
</organism>
<reference key="1">
    <citation type="journal article" date="2009" name="PLoS Genet.">
        <title>Organised genome dynamics in the Escherichia coli species results in highly diverse adaptive paths.</title>
        <authorList>
            <person name="Touchon M."/>
            <person name="Hoede C."/>
            <person name="Tenaillon O."/>
            <person name="Barbe V."/>
            <person name="Baeriswyl S."/>
            <person name="Bidet P."/>
            <person name="Bingen E."/>
            <person name="Bonacorsi S."/>
            <person name="Bouchier C."/>
            <person name="Bouvet O."/>
            <person name="Calteau A."/>
            <person name="Chiapello H."/>
            <person name="Clermont O."/>
            <person name="Cruveiller S."/>
            <person name="Danchin A."/>
            <person name="Diard M."/>
            <person name="Dossat C."/>
            <person name="Karoui M.E."/>
            <person name="Frapy E."/>
            <person name="Garry L."/>
            <person name="Ghigo J.M."/>
            <person name="Gilles A.M."/>
            <person name="Johnson J."/>
            <person name="Le Bouguenec C."/>
            <person name="Lescat M."/>
            <person name="Mangenot S."/>
            <person name="Martinez-Jehanne V."/>
            <person name="Matic I."/>
            <person name="Nassif X."/>
            <person name="Oztas S."/>
            <person name="Petit M.A."/>
            <person name="Pichon C."/>
            <person name="Rouy Z."/>
            <person name="Ruf C.S."/>
            <person name="Schneider D."/>
            <person name="Tourret J."/>
            <person name="Vacherie B."/>
            <person name="Vallenet D."/>
            <person name="Medigue C."/>
            <person name="Rocha E.P.C."/>
            <person name="Denamur E."/>
        </authorList>
    </citation>
    <scope>NUCLEOTIDE SEQUENCE [LARGE SCALE GENOMIC DNA]</scope>
    <source>
        <strain>ATCC 35469 / DSM 13698 / BCRC 15582 / CCUG 18766 / IAM 14443 / JCM 21226 / LMG 7866 / NBRC 102419 / NCTC 12128 / CDC 0568-73</strain>
    </source>
</reference>
<proteinExistence type="inferred from homology"/>
<comment type="function">
    <text evidence="1">Converts seryl-tRNA(Sec) to selenocysteinyl-tRNA(Sec) required for selenoprotein biosynthesis.</text>
</comment>
<comment type="catalytic activity">
    <reaction evidence="1">
        <text>L-seryl-tRNA(Sec) + selenophosphate + H(+) = L-selenocysteinyl-tRNA(Sec) + phosphate</text>
        <dbReference type="Rhea" id="RHEA:22728"/>
        <dbReference type="Rhea" id="RHEA-COMP:9742"/>
        <dbReference type="Rhea" id="RHEA-COMP:9743"/>
        <dbReference type="ChEBI" id="CHEBI:15378"/>
        <dbReference type="ChEBI" id="CHEBI:16144"/>
        <dbReference type="ChEBI" id="CHEBI:43474"/>
        <dbReference type="ChEBI" id="CHEBI:78533"/>
        <dbReference type="ChEBI" id="CHEBI:78573"/>
        <dbReference type="EC" id="2.9.1.1"/>
    </reaction>
</comment>
<comment type="cofactor">
    <cofactor evidence="1">
        <name>pyridoxal 5'-phosphate</name>
        <dbReference type="ChEBI" id="CHEBI:597326"/>
    </cofactor>
</comment>
<comment type="pathway">
    <text evidence="1">Aminoacyl-tRNA biosynthesis; selenocysteinyl-tRNA(Sec) biosynthesis; selenocysteinyl-tRNA(Sec) from L-seryl-tRNA(Sec) (bacterial route): step 1/1.</text>
</comment>
<comment type="subunit">
    <text evidence="1">Homodecamer; pentamer of dimers. Binds only one seryl-tRNA(Sec) per dimer.</text>
</comment>
<comment type="subcellular location">
    <subcellularLocation>
        <location evidence="1">Cytoplasm</location>
    </subcellularLocation>
</comment>
<comment type="similarity">
    <text evidence="1">Belongs to the SelA family.</text>
</comment>
<gene>
    <name evidence="1" type="primary">selA</name>
    <name type="ordered locus">EFER_3585</name>
</gene>
<dbReference type="EC" id="2.9.1.1" evidence="1"/>
<dbReference type="EMBL" id="CU928158">
    <property type="protein sequence ID" value="CAQ91057.1"/>
    <property type="molecule type" value="Genomic_DNA"/>
</dbReference>
<dbReference type="RefSeq" id="WP_000206226.1">
    <property type="nucleotide sequence ID" value="NC_011740.1"/>
</dbReference>
<dbReference type="SMR" id="B7LTJ8"/>
<dbReference type="GeneID" id="75059809"/>
<dbReference type="KEGG" id="efe:EFER_3585"/>
<dbReference type="HOGENOM" id="CLU_038142_1_0_6"/>
<dbReference type="OrthoDB" id="9787096at2"/>
<dbReference type="UniPathway" id="UPA00906">
    <property type="reaction ID" value="UER00896"/>
</dbReference>
<dbReference type="Proteomes" id="UP000000745">
    <property type="component" value="Chromosome"/>
</dbReference>
<dbReference type="GO" id="GO:0005737">
    <property type="term" value="C:cytoplasm"/>
    <property type="evidence" value="ECO:0007669"/>
    <property type="project" value="UniProtKB-SubCell"/>
</dbReference>
<dbReference type="GO" id="GO:0004125">
    <property type="term" value="F:L-seryl-tRNA(Sec) selenium transferase activity"/>
    <property type="evidence" value="ECO:0007669"/>
    <property type="project" value="UniProtKB-UniRule"/>
</dbReference>
<dbReference type="GO" id="GO:0001717">
    <property type="term" value="P:conversion of seryl-tRNAsec to selenocys-tRNAsec"/>
    <property type="evidence" value="ECO:0007669"/>
    <property type="project" value="UniProtKB-UniRule"/>
</dbReference>
<dbReference type="GO" id="GO:0001514">
    <property type="term" value="P:selenocysteine incorporation"/>
    <property type="evidence" value="ECO:0007669"/>
    <property type="project" value="UniProtKB-UniRule"/>
</dbReference>
<dbReference type="FunFam" id="3.40.640.10:FF:000028">
    <property type="entry name" value="L-seryl-tRNA(Sec) selenium transferase"/>
    <property type="match status" value="1"/>
</dbReference>
<dbReference type="FunFam" id="3.90.1150.180:FF:000001">
    <property type="entry name" value="L-seryl-tRNA(Sec) selenium transferase"/>
    <property type="match status" value="1"/>
</dbReference>
<dbReference type="Gene3D" id="3.90.1150.180">
    <property type="match status" value="1"/>
</dbReference>
<dbReference type="Gene3D" id="3.40.640.10">
    <property type="entry name" value="Type I PLP-dependent aspartate aminotransferase-like (Major domain)"/>
    <property type="match status" value="1"/>
</dbReference>
<dbReference type="HAMAP" id="MF_00423">
    <property type="entry name" value="SelA"/>
    <property type="match status" value="1"/>
</dbReference>
<dbReference type="InterPro" id="IPR015424">
    <property type="entry name" value="PyrdxlP-dep_Trfase"/>
</dbReference>
<dbReference type="InterPro" id="IPR015421">
    <property type="entry name" value="PyrdxlP-dep_Trfase_major"/>
</dbReference>
<dbReference type="InterPro" id="IPR018319">
    <property type="entry name" value="SelA-like"/>
</dbReference>
<dbReference type="InterPro" id="IPR004534">
    <property type="entry name" value="SelA_trans"/>
</dbReference>
<dbReference type="InterPro" id="IPR025862">
    <property type="entry name" value="SelA_trans_N_dom"/>
</dbReference>
<dbReference type="NCBIfam" id="TIGR00474">
    <property type="entry name" value="selA"/>
    <property type="match status" value="1"/>
</dbReference>
<dbReference type="PANTHER" id="PTHR32328">
    <property type="entry name" value="L-SERYL-TRNA(SEC) SELENIUM TRANSFERASE"/>
    <property type="match status" value="1"/>
</dbReference>
<dbReference type="PANTHER" id="PTHR32328:SF0">
    <property type="entry name" value="L-SERYL-TRNA(SEC) SELENIUM TRANSFERASE"/>
    <property type="match status" value="1"/>
</dbReference>
<dbReference type="Pfam" id="PF12390">
    <property type="entry name" value="Se-cys_synth_N"/>
    <property type="match status" value="1"/>
</dbReference>
<dbReference type="Pfam" id="PF03841">
    <property type="entry name" value="SelA"/>
    <property type="match status" value="1"/>
</dbReference>
<dbReference type="SUPFAM" id="SSF53383">
    <property type="entry name" value="PLP-dependent transferases"/>
    <property type="match status" value="1"/>
</dbReference>
<name>SELA_ESCF3</name>
<accession>B7LTJ8</accession>
<keyword id="KW-0963">Cytoplasm</keyword>
<keyword id="KW-0648">Protein biosynthesis</keyword>
<keyword id="KW-0663">Pyridoxal phosphate</keyword>
<keyword id="KW-0711">Selenium</keyword>
<keyword id="KW-0808">Transferase</keyword>
<sequence>MTTETRSLFSQLPAIDRLLRDSAFLTLRETYGHTRVVDLLRQMVDEAREMIRATQALPAWCDNWACEADARLQKEAQSALRPVINLTGTVLHTNLGRALQAEEAVAAVSQAMRSPVTLEYDLDGAGRGHRDRALAELLCRITGAEDACIVNNNAAAVLLMLAATASGKEVVVSRGELVEIGGAFRIPDVMRQAGCALHEVGTTNRTHAKDYRQAVNENTALLMKVHTSNYSIEGFTKAVDEAELVSIGKELDIPVVTDLGSGSLVDLSQYGLPKEPMPQELIAAGVSLVSFSGDKLLGGPQAGIIVGKKEMIARLQSHPLKRALRADKMTLAALEATLRLYLHPEALSEKLPTLRLLTRQQEKIQVQGQRLLAPLLAHYGEEFAVAVMPCQSQIGSGSLPVDRLPSAALTFTPHDGRGSRLETLAARWRELPVPVIGRIYDGRLWLDLRCLEDETRFLEMLLK</sequence>
<feature type="chain" id="PRO_1000124144" description="L-seryl-tRNA(Sec) selenium transferase">
    <location>
        <begin position="1"/>
        <end position="463"/>
    </location>
</feature>
<feature type="modified residue" description="N6-(pyridoxal phosphate)lysine" evidence="1">
    <location>
        <position position="295"/>
    </location>
</feature>
<protein>
    <recommendedName>
        <fullName evidence="1">L-seryl-tRNA(Sec) selenium transferase</fullName>
        <ecNumber evidence="1">2.9.1.1</ecNumber>
    </recommendedName>
    <alternativeName>
        <fullName evidence="1">Selenocysteine synthase</fullName>
        <shortName evidence="1">Sec synthase</shortName>
    </alternativeName>
    <alternativeName>
        <fullName evidence="1">Selenocysteinyl-tRNA(Sec) synthase</fullName>
    </alternativeName>
</protein>
<evidence type="ECO:0000255" key="1">
    <source>
        <dbReference type="HAMAP-Rule" id="MF_00423"/>
    </source>
</evidence>